<dbReference type="EMBL" id="CP000485">
    <property type="protein sequence ID" value="ABK84598.1"/>
    <property type="molecule type" value="Genomic_DNA"/>
</dbReference>
<dbReference type="KEGG" id="btl:BALH_1248"/>
<dbReference type="HOGENOM" id="CLU_187365_0_0_9"/>
<dbReference type="HAMAP" id="MF_00506">
    <property type="entry name" value="UPF0180"/>
    <property type="match status" value="1"/>
</dbReference>
<dbReference type="InterPro" id="IPR005370">
    <property type="entry name" value="UPF0180"/>
</dbReference>
<dbReference type="NCBIfam" id="NF002845">
    <property type="entry name" value="PRK03094.1"/>
    <property type="match status" value="1"/>
</dbReference>
<dbReference type="Pfam" id="PF03698">
    <property type="entry name" value="UPF0180"/>
    <property type="match status" value="1"/>
</dbReference>
<gene>
    <name type="ordered locus">BALH_1248</name>
</gene>
<protein>
    <recommendedName>
        <fullName evidence="1">UPF0180 protein BALH_1248</fullName>
    </recommendedName>
</protein>
<feature type="chain" id="PRO_1000014967" description="UPF0180 protein BALH_1248">
    <location>
        <begin position="1"/>
        <end position="82"/>
    </location>
</feature>
<comment type="similarity">
    <text evidence="1">Belongs to the UPF0180 family.</text>
</comment>
<evidence type="ECO:0000255" key="1">
    <source>
        <dbReference type="HAMAP-Rule" id="MF_00506"/>
    </source>
</evidence>
<name>Y1248_BACAH</name>
<organism>
    <name type="scientific">Bacillus thuringiensis (strain Al Hakam)</name>
    <dbReference type="NCBI Taxonomy" id="412694"/>
    <lineage>
        <taxon>Bacteria</taxon>
        <taxon>Bacillati</taxon>
        <taxon>Bacillota</taxon>
        <taxon>Bacilli</taxon>
        <taxon>Bacillales</taxon>
        <taxon>Bacillaceae</taxon>
        <taxon>Bacillus</taxon>
        <taxon>Bacillus cereus group</taxon>
    </lineage>
</organism>
<proteinExistence type="inferred from homology"/>
<accession>A0RBK5</accession>
<sequence>MRIMARIGVENSLTDVQQALKQQGHEVVTLNSEQDAQGCDCCVVTGQDSNMMGIADASIKGSVITAHGLTTDDICQQVESRT</sequence>
<reference key="1">
    <citation type="journal article" date="2007" name="J. Bacteriol.">
        <title>The complete genome sequence of Bacillus thuringiensis Al Hakam.</title>
        <authorList>
            <person name="Challacombe J.F."/>
            <person name="Altherr M.R."/>
            <person name="Xie G."/>
            <person name="Bhotika S.S."/>
            <person name="Brown N."/>
            <person name="Bruce D."/>
            <person name="Campbell C.S."/>
            <person name="Campbell M.L."/>
            <person name="Chen J."/>
            <person name="Chertkov O."/>
            <person name="Cleland C."/>
            <person name="Dimitrijevic M."/>
            <person name="Doggett N.A."/>
            <person name="Fawcett J.J."/>
            <person name="Glavina T."/>
            <person name="Goodwin L.A."/>
            <person name="Green L.D."/>
            <person name="Han C.S."/>
            <person name="Hill K.K."/>
            <person name="Hitchcock P."/>
            <person name="Jackson P.J."/>
            <person name="Keim P."/>
            <person name="Kewalramani A.R."/>
            <person name="Longmire J."/>
            <person name="Lucas S."/>
            <person name="Malfatti S."/>
            <person name="Martinez D."/>
            <person name="McMurry K."/>
            <person name="Meincke L.J."/>
            <person name="Misra M."/>
            <person name="Moseman B.L."/>
            <person name="Mundt M."/>
            <person name="Munk A.C."/>
            <person name="Okinaka R.T."/>
            <person name="Parson-Quintana B."/>
            <person name="Reilly L.P."/>
            <person name="Richardson P."/>
            <person name="Robinson D.L."/>
            <person name="Saunders E."/>
            <person name="Tapia R."/>
            <person name="Tesmer J.G."/>
            <person name="Thayer N."/>
            <person name="Thompson L.S."/>
            <person name="Tice H."/>
            <person name="Ticknor L.O."/>
            <person name="Wills P.L."/>
            <person name="Gilna P."/>
            <person name="Brettin T.S."/>
        </authorList>
    </citation>
    <scope>NUCLEOTIDE SEQUENCE [LARGE SCALE GENOMIC DNA]</scope>
    <source>
        <strain>Al Hakam</strain>
    </source>
</reference>